<protein>
    <recommendedName>
        <fullName evidence="14">Bifunctional ent-kaurene synthase</fullName>
        <ecNumber evidence="5">4.2.3.19</ecNumber>
        <ecNumber evidence="5">5.5.1.13</ecNumber>
    </recommendedName>
    <alternativeName>
        <fullName evidence="16">CPS/KS</fullName>
    </alternativeName>
    <alternativeName>
        <fullName evidence="16">Ent-copalyl diphosphate synthase</fullName>
    </alternativeName>
    <alternativeName>
        <fullName evidence="3">Ent-kaur-16-ene synthase</fullName>
    </alternativeName>
    <alternativeName>
        <fullName evidence="15">Gibberellin cluster-kaurene synthase</fullName>
    </alternativeName>
</protein>
<keyword id="KW-0413">Isomerase</keyword>
<keyword id="KW-0456">Lyase</keyword>
<keyword id="KW-0460">Magnesium</keyword>
<keyword id="KW-0479">Metal-binding</keyword>
<keyword id="KW-1185">Reference proteome</keyword>
<proteinExistence type="evidence at protein level"/>
<gene>
    <name evidence="16" type="primary">CPS/KS</name>
    <name type="ORF">FFUJ_14336</name>
</gene>
<dbReference type="EC" id="4.2.3.19" evidence="5"/>
<dbReference type="EC" id="5.5.1.13" evidence="5"/>
<dbReference type="EMBL" id="HF679027">
    <property type="protein sequence ID" value="CCT69398.1"/>
    <property type="molecule type" value="Genomic_DNA"/>
</dbReference>
<dbReference type="SMR" id="S0EA85"/>
<dbReference type="STRING" id="1279085.S0EA85"/>
<dbReference type="EnsemblFungi" id="CCT69398">
    <property type="protein sequence ID" value="CCT69398"/>
    <property type="gene ID" value="FFUJ_14336"/>
</dbReference>
<dbReference type="VEuPathDB" id="FungiDB:FFUJ_14336"/>
<dbReference type="HOGENOM" id="CLU_005861_0_0_1"/>
<dbReference type="BRENDA" id="4.2.3.19">
    <property type="organism ID" value="2425"/>
</dbReference>
<dbReference type="UniPathway" id="UPA00390"/>
<dbReference type="Proteomes" id="UP000016800">
    <property type="component" value="Chromosome 5"/>
</dbReference>
<dbReference type="GO" id="GO:0009905">
    <property type="term" value="F:ent-copalyl diphosphate synthase activity"/>
    <property type="evidence" value="ECO:0007669"/>
    <property type="project" value="UniProtKB-EC"/>
</dbReference>
<dbReference type="GO" id="GO:0009899">
    <property type="term" value="F:ent-kaurene synthase activity"/>
    <property type="evidence" value="ECO:0007669"/>
    <property type="project" value="UniProtKB-EC"/>
</dbReference>
<dbReference type="GO" id="GO:0000287">
    <property type="term" value="F:magnesium ion binding"/>
    <property type="evidence" value="ECO:0007669"/>
    <property type="project" value="TreeGrafter"/>
</dbReference>
<dbReference type="GO" id="GO:0009686">
    <property type="term" value="P:gibberellin biosynthetic process"/>
    <property type="evidence" value="ECO:0007669"/>
    <property type="project" value="UniProtKB-UniPathway"/>
</dbReference>
<dbReference type="Gene3D" id="1.50.10.160">
    <property type="match status" value="1"/>
</dbReference>
<dbReference type="Gene3D" id="1.50.10.20">
    <property type="match status" value="1"/>
</dbReference>
<dbReference type="InterPro" id="IPR017057">
    <property type="entry name" value="Ent-kaurene_synthase_fun"/>
</dbReference>
<dbReference type="InterPro" id="IPR050148">
    <property type="entry name" value="Terpene_synthase-like"/>
</dbReference>
<dbReference type="InterPro" id="IPR008930">
    <property type="entry name" value="Terpenoid_cyclase/PrenylTrfase"/>
</dbReference>
<dbReference type="PANTHER" id="PTHR31739:SF25">
    <property type="entry name" value="(E,E)-GERANYLLINALOOL SYNTHASE"/>
    <property type="match status" value="1"/>
</dbReference>
<dbReference type="PANTHER" id="PTHR31739">
    <property type="entry name" value="ENT-COPALYL DIPHOSPHATE SYNTHASE, CHLOROPLASTIC"/>
    <property type="match status" value="1"/>
</dbReference>
<dbReference type="PIRSF" id="PIRSF036498">
    <property type="entry name" value="Ent-kaurene_synthase_fungi"/>
    <property type="match status" value="1"/>
</dbReference>
<dbReference type="SUPFAM" id="SSF48239">
    <property type="entry name" value="Terpenoid cyclases/Protein prenyltransferases"/>
    <property type="match status" value="1"/>
</dbReference>
<accession>S0EA85</accession>
<sequence length="952" mass="106762">MPGKIENGTPKDLKTGNDFVSAAKSLLDRAFKSHHSYYGLCSTSCQVYDTAWVAMIPKTRDNVKQWLFPECFHYLLKTQAADGSWGSLPTTQTAGILDTASAVLALLCHAQEPLQILDVSPDEMGLRIEHGVTSLKRQLAVWNDVEDTNHIGVEFIIPALLSMLEKELDVPSFEFPCRSILERMHGEKLGHFDLEQVYGKPSSLLHSLEAFLGKLDFDRLSHHLYHGSMMASPSSTAAYLIGATKWDDEAEDYLRHVMRNGAGHGNGGISGTFPTTHFECSWIIATLLKGGFTLKQIDGDGLRGLSTILLEALRDENGVIGFAPRTADVDDTAKALLALSLVNQPVSPDIMIKVFEGKDHFTTFGSERDPSLTSNLHVLLSLLKQSNLSQYHPQILKTTLFTCRWWWGSDHCVKDKWNLSHLYPTMLLVEAFTEVLHLIDGGELSSLFDESFKCKIGLSIFQAVLRIILTQDNDGSWRGYREQTCYAILALVQARHVCFFTHMVDRLQSCVDRGFSWLKSCSFHSQDLTWTSKTAYEVGFVAEAYKLAALQSASLEVPAATIGHSVTSAVPSSDLEKYMRLVRKTALFSPLDEWGLMASIIESSFFVPLLQAQRVEIYPRDNIKVDEDKYLSIIPFTWVGCNNRSRTFASNRWLYDMMYLSLLGYQTDEYMEAVAGPVFGDVSLLHQTIDKVIDNTMGNLARANGTVHSGNGHQHESPNIGQVEDTLTRFTNSVLNHKDVLNSSSSDQDTLRREFRTFMHAHITQIEDNSRFSKQASSDAFSSPEQSYFQWVNSTGGSHVACAYSFAFSNCLMSANLLQGKDAFPSGTQKYLISSVMRHATNMCRMYNDFGSIARDNAERNVNSIHFPEFTLCNGTSQNLDERKERLLKIATYEQGYLDRALEALERQSRDDAGDRAGSKDMRKLKIVKLFCDVTDLYDQLYVIKDLSSSMK</sequence>
<feature type="chain" id="PRO_0000442046" description="Bifunctional ent-kaurene synthase">
    <location>
        <begin position="1"/>
        <end position="952"/>
    </location>
</feature>
<feature type="short sequence motif" description="DXDD B-type cyclization motif" evidence="1">
    <location>
        <begin position="328"/>
        <end position="331"/>
    </location>
</feature>
<feature type="short sequence motif" description="DEXXE A-type cyclization motif" evidence="1">
    <location>
        <begin position="668"/>
        <end position="672"/>
    </location>
</feature>
<feature type="binding site" evidence="2">
    <location>
        <position position="668"/>
    </location>
    <ligand>
        <name>Mg(2+)</name>
        <dbReference type="ChEBI" id="CHEBI:18420"/>
        <label>1</label>
    </ligand>
</feature>
<feature type="binding site" evidence="2">
    <location>
        <position position="668"/>
    </location>
    <ligand>
        <name>Mg(2+)</name>
        <dbReference type="ChEBI" id="CHEBI:18420"/>
        <label>2</label>
    </ligand>
</feature>
<feature type="binding site" evidence="2">
    <location>
        <position position="672"/>
    </location>
    <ligand>
        <name>Mg(2+)</name>
        <dbReference type="ChEBI" id="CHEBI:18420"/>
        <label>1</label>
    </ligand>
</feature>
<feature type="binding site" evidence="2">
    <location>
        <position position="672"/>
    </location>
    <ligand>
        <name>Mg(2+)</name>
        <dbReference type="ChEBI" id="CHEBI:18420"/>
        <label>2</label>
    </ligand>
</feature>
<feature type="binding site" evidence="2">
    <location>
        <position position="848"/>
    </location>
    <ligand>
        <name>Mg(2+)</name>
        <dbReference type="ChEBI" id="CHEBI:18420"/>
        <label>3</label>
    </ligand>
</feature>
<feature type="binding site" evidence="2">
    <location>
        <position position="849"/>
    </location>
    <ligand>
        <name>Mg(2+)</name>
        <dbReference type="ChEBI" id="CHEBI:18420"/>
        <label>3</label>
    </ligand>
</feature>
<feature type="binding site" evidence="2">
    <location>
        <position position="852"/>
    </location>
    <ligand>
        <name>Mg(2+)</name>
        <dbReference type="ChEBI" id="CHEBI:18420"/>
        <label>3</label>
    </ligand>
</feature>
<feature type="binding site" evidence="2">
    <location>
        <position position="856"/>
    </location>
    <ligand>
        <name>Mg(2+)</name>
        <dbReference type="ChEBI" id="CHEBI:18420"/>
        <label>3</label>
    </ligand>
</feature>
<reference key="1">
    <citation type="journal article" date="2013" name="PLoS Pathog.">
        <title>Deciphering the cryptic genome: genome-wide analyses of the rice pathogen Fusarium fujikuroi reveal complex regulation of secondary metabolism and novel metabolites.</title>
        <authorList>
            <person name="Wiemann P."/>
            <person name="Sieber C.M.K."/>
            <person name="von Bargen K.W."/>
            <person name="Studt L."/>
            <person name="Niehaus E.-M."/>
            <person name="Espino J.J."/>
            <person name="Huss K."/>
            <person name="Michielse C.B."/>
            <person name="Albermann S."/>
            <person name="Wagner D."/>
            <person name="Bergner S.V."/>
            <person name="Connolly L.R."/>
            <person name="Fischer A."/>
            <person name="Reuter G."/>
            <person name="Kleigrewe K."/>
            <person name="Bald T."/>
            <person name="Wingfield B.D."/>
            <person name="Ophir R."/>
            <person name="Freeman S."/>
            <person name="Hippler M."/>
            <person name="Smith K.M."/>
            <person name="Brown D.W."/>
            <person name="Proctor R.H."/>
            <person name="Muensterkoetter M."/>
            <person name="Freitag M."/>
            <person name="Humpf H.-U."/>
            <person name="Gueldener U."/>
            <person name="Tudzynski B."/>
        </authorList>
    </citation>
    <scope>NUCLEOTIDE SEQUENCE [LARGE SCALE GENOMIC DNA]</scope>
    <scope>FUNCTION</scope>
    <source>
        <strain>CBS 195.34 / IMI 58289 / NRRL A-6831</strain>
    </source>
</reference>
<reference key="2">
    <citation type="journal article" date="1998" name="Curr. Genet.">
        <title>Gibberellin biosynthesis in Gibberella fujikuroi: cloning and characterization of the copalyl diphosphate synthase gene.</title>
        <authorList>
            <person name="Tudzynski B."/>
            <person name="Kawaide H."/>
            <person name="Kamiya Y."/>
        </authorList>
    </citation>
    <scope>FUNCTION</scope>
    <scope>INDUCTION</scope>
    <scope>DISRUPTION PHENOTYPE</scope>
    <scope>PATHWAY</scope>
</reference>
<reference key="3">
    <citation type="journal article" date="1998" name="Fungal Genet. Biol.">
        <title>Gibberellin biosynthetic pathway in Gibberella fujikuroi: evidence for a gene cluster.</title>
        <authorList>
            <person name="Tudzynski B."/>
            <person name="Hoelter K."/>
        </authorList>
    </citation>
    <scope>FUNCTION</scope>
    <scope>INDUCTION</scope>
    <scope>PATHWAY</scope>
</reference>
<reference key="4">
    <citation type="journal article" date="1999" name="Appl. Environ. Microbiol.">
        <title>Deletions in the gibberellin biosynthesis gene cluster of Gibberella fujikuroi by restriction enzyme-mediated integration and conventional transformation-mediated mutagenesis.</title>
        <authorList>
            <person name="Linnemannstoens P."/>
            <person name="Voss T."/>
            <person name="Hedden P."/>
            <person name="Gaskin P."/>
            <person name="Tudzynski B."/>
        </authorList>
    </citation>
    <scope>FUNCTION</scope>
</reference>
<reference key="5">
    <citation type="journal article" date="2000" name="Biosci. Biotechnol. Biochem.">
        <title>Cloning of a full-length cDNA encoding ent-kaurene synthase from Gibberella fujikuroi: functional analysis of a bifunctional diterpene cyclase.</title>
        <authorList>
            <person name="Toyomasu T."/>
            <person name="Kawaide H."/>
            <person name="Ishizaki A."/>
            <person name="Shinoda S."/>
            <person name="Otsuka M."/>
            <person name="Mitsuhashi W."/>
            <person name="Sassa T."/>
        </authorList>
    </citation>
    <scope>FUNCTION</scope>
    <scope>CATALYTIC ACTIVITY</scope>
    <scope>PATHWAY</scope>
</reference>
<reference key="6">
    <citation type="journal article" date="2001" name="Appl. Environ. Microbiol.">
        <title>The P450-4 gene of Gibberella fujikuroi encodes ent-kaurene oxidase in the gibberellin biosynthesis pathway.</title>
        <authorList>
            <person name="Tudzynski B."/>
            <person name="Hedden P."/>
            <person name="Carrera E."/>
            <person name="Gaskin P."/>
        </authorList>
    </citation>
    <scope>FUNCTION</scope>
</reference>
<reference key="7">
    <citation type="journal article" date="2001" name="Proc. Natl. Acad. Sci. U.S.A.">
        <title>The P450-1 gene of Gibberella fujikuroi encodes a multifunctional enzyme in gibberellin biosynthesis.</title>
        <authorList>
            <person name="Rojas M.C."/>
            <person name="Hedden P."/>
            <person name="Gaskin P."/>
            <person name="Tudzynski B."/>
        </authorList>
    </citation>
    <scope>FUNCTION</scope>
</reference>
<reference key="8">
    <citation type="journal article" date="2002" name="J. Biol. Chem.">
        <title>The gibberellin 20-oxidase of Gibberella fujikuroi is a multifunctional monooxygenase.</title>
        <authorList>
            <person name="Tudzynski B."/>
            <person name="Rojas M.C."/>
            <person name="Gaskin P."/>
            <person name="Hedden P."/>
        </authorList>
    </citation>
    <scope>FUNCTION</scope>
</reference>
<reference key="9">
    <citation type="journal article" date="2003" name="J. Biol. Chem.">
        <title>Characterization of the final two genes of the gibberellin biosynthesis gene cluster of Gibberella fujikuroi: des and P450-3 encode GA4 desaturase and the 13-hydroxylase, respectively.</title>
        <authorList>
            <person name="Tudzynski B."/>
            <person name="Mihlan M."/>
            <person name="Rojas M.C."/>
            <person name="Linnemannstons P."/>
            <person name="Gaskin P."/>
            <person name="Hedden P."/>
        </authorList>
    </citation>
    <scope>FUNCTION</scope>
</reference>
<reference key="10">
    <citation type="journal article" date="2005" name="Phytochemistry">
        <title>Distribution of gibberellin biosynthetic genes and gibberellin production in the Gibberella fujikuroi species complex.</title>
        <authorList>
            <person name="Malonek S."/>
            <person name="Boemke C."/>
            <person name="Bornberg-Bauer E."/>
            <person name="Rojas M.C."/>
            <person name="Hedden P."/>
            <person name="Hopkins P."/>
            <person name="Tudzynski B."/>
        </authorList>
    </citation>
    <scope>FUNCTION</scope>
</reference>
<evidence type="ECO:0000250" key="1">
    <source>
        <dbReference type="UniProtKB" id="A0A1U8QHE3"/>
    </source>
</evidence>
<evidence type="ECO:0000250" key="2">
    <source>
        <dbReference type="UniProtKB" id="Q40577"/>
    </source>
</evidence>
<evidence type="ECO:0000250" key="3">
    <source>
        <dbReference type="UniProtKB" id="Q9UVY5"/>
    </source>
</evidence>
<evidence type="ECO:0000269" key="4">
    <source>
    </source>
</evidence>
<evidence type="ECO:0000269" key="5">
    <source>
    </source>
</evidence>
<evidence type="ECO:0000269" key="6">
    <source>
    </source>
</evidence>
<evidence type="ECO:0000269" key="7">
    <source>
    </source>
</evidence>
<evidence type="ECO:0000269" key="8">
    <source>
    </source>
</evidence>
<evidence type="ECO:0000269" key="9">
    <source>
    </source>
</evidence>
<evidence type="ECO:0000269" key="10">
    <source>
    </source>
</evidence>
<evidence type="ECO:0000269" key="11">
    <source>
    </source>
</evidence>
<evidence type="ECO:0000269" key="12">
    <source>
    </source>
</evidence>
<evidence type="ECO:0000269" key="13">
    <source>
    </source>
</evidence>
<evidence type="ECO:0000303" key="14">
    <source>
    </source>
</evidence>
<evidence type="ECO:0000303" key="15">
    <source>
    </source>
</evidence>
<evidence type="ECO:0000303" key="16">
    <source>
    </source>
</evidence>
<evidence type="ECO:0000305" key="17"/>
<comment type="function">
    <text evidence="4 5 6 7 8 9 10 11 12 13">Bifunctional ent-kaurene synthase; part of the gene cluster that mediates the biosynthesis of gibberellins (GAs), diterpenoids that may provide a selective advantage during infection of the preferred host plant, rice (PubMed:10347043, PubMed:12750377, PubMed:15925394, PubMed:23825955, PubMed:9917370). Gibberellins (GAs) are diterpenoids and are synthesized via the mevalonate pathway (PubMed:12750377). Biosynthesis of the major metabolite GA3 (gibberellic acid) from geranylgeranyl diphosphate (GGPP) requires 13 steps (PubMed:12750377). The GGPP produced by the geranylgeranyl diphosphate synthase GGS2 is converted to ent-kaurene via ent-copalyldiphosphate in a two-step cyclization reaction performed by the bifunctional ent-copalyl diphosphate synthase/ent-kaurene synthase enzyme (CPS/KS) (PubMed:10803977, PubMed:12750377, PubMed:9745028). Ent-Kaurene is metabolized to GAs by a series of oxidation reactions catalyzed by cytochrome P450 monooxygenases (PubMed:12750377, PubMed:9917370). Cytochrome P450 monooxygenase P450-4 is an ent-kaurene oxidase that catalyzes the three oxidation steps between ent-kaurene and ent-kaurenoic acid (PubMed:11472927). The highly multifunctional cytochrome P450 monooxygenase P450-1 then catalyzes four steps involving oxidation at two carbon atoms, in the main pathway from ent-kaurenoic acid to GA14 via GA12-aldehyde as well as producing kaurenolides and fujenoic acids as by-products (PubMed:11320210). The cytochrome P450 monooxygenase P450-2 then converts GA14 to GA4 by removal of C-20 (PubMed:11943776). GA4 is further converted to GA7 by the GA4 desaturase DES via 1,2-desaturation before cytochrome P450 monooxygenase P450-3, a 13-hydroxylase, hydroxylates GA7 to GA3, the final product of the GA-biosynthetic pathway (PubMed:12750377).</text>
</comment>
<comment type="catalytic activity">
    <reaction evidence="5">
        <text>ent-copalyl diphosphate = ent-kaur-16-ene + diphosphate</text>
        <dbReference type="Rhea" id="RHEA:22220"/>
        <dbReference type="ChEBI" id="CHEBI:15415"/>
        <dbReference type="ChEBI" id="CHEBI:33019"/>
        <dbReference type="ChEBI" id="CHEBI:58553"/>
        <dbReference type="EC" id="4.2.3.19"/>
    </reaction>
</comment>
<comment type="catalytic activity">
    <reaction evidence="5">
        <text>(2E,6E,10E)-geranylgeranyl diphosphate = ent-copalyl diphosphate</text>
        <dbReference type="Rhea" id="RHEA:14841"/>
        <dbReference type="ChEBI" id="CHEBI:58553"/>
        <dbReference type="ChEBI" id="CHEBI:58756"/>
        <dbReference type="EC" id="5.5.1.13"/>
    </reaction>
</comment>
<comment type="cofactor">
    <cofactor evidence="2">
        <name>Mg(2+)</name>
        <dbReference type="ChEBI" id="CHEBI:18420"/>
    </cofactor>
</comment>
<comment type="pathway">
    <text evidence="5 12 13">Plant hormone biosynthesis; gibberellin biosynthesis.</text>
</comment>
<comment type="induction">
    <text evidence="13">Expression is induced under gibberellin-producing conditions (PubMed:9917370).</text>
</comment>
<comment type="domain">
    <text evidence="17">The Asp-Asp-Xaa-Xaa-Asp/Glu (DDXXD/E) motif is important for the catalytic activity, presumably through binding to Mg(2+).</text>
</comment>
<comment type="disruption phenotype">
    <text evidence="13">Impairs the production of gibberellins (PubMed:9917370).</text>
</comment>
<comment type="similarity">
    <text evidence="17">Belongs to the terpene synthase family.</text>
</comment>
<organism>
    <name type="scientific">Gibberella fujikuroi (strain CBS 195.34 / IMI 58289 / NRRL A-6831)</name>
    <name type="common">Bakanae and foot rot disease fungus</name>
    <name type="synonym">Fusarium fujikuroi</name>
    <dbReference type="NCBI Taxonomy" id="1279085"/>
    <lineage>
        <taxon>Eukaryota</taxon>
        <taxon>Fungi</taxon>
        <taxon>Dikarya</taxon>
        <taxon>Ascomycota</taxon>
        <taxon>Pezizomycotina</taxon>
        <taxon>Sordariomycetes</taxon>
        <taxon>Hypocreomycetidae</taxon>
        <taxon>Hypocreales</taxon>
        <taxon>Nectriaceae</taxon>
        <taxon>Fusarium</taxon>
        <taxon>Fusarium fujikuroi species complex</taxon>
    </lineage>
</organism>
<name>GA6_GIBF5</name>